<organism>
    <name type="scientific">Rattus norvegicus</name>
    <name type="common">Rat</name>
    <dbReference type="NCBI Taxonomy" id="10116"/>
    <lineage>
        <taxon>Eukaryota</taxon>
        <taxon>Metazoa</taxon>
        <taxon>Chordata</taxon>
        <taxon>Craniata</taxon>
        <taxon>Vertebrata</taxon>
        <taxon>Euteleostomi</taxon>
        <taxon>Mammalia</taxon>
        <taxon>Eutheria</taxon>
        <taxon>Euarchontoglires</taxon>
        <taxon>Glires</taxon>
        <taxon>Rodentia</taxon>
        <taxon>Myomorpha</taxon>
        <taxon>Muroidea</taxon>
        <taxon>Muridae</taxon>
        <taxon>Murinae</taxon>
        <taxon>Rattus</taxon>
    </lineage>
</organism>
<name>TF3C1_RAT</name>
<feature type="chain" id="PRO_0000209712" description="General transcription factor 3C polypeptide 1">
    <location>
        <begin position="1"/>
        <end position="2148"/>
    </location>
</feature>
<feature type="region of interest" description="Disordered" evidence="4">
    <location>
        <begin position="473"/>
        <end position="568"/>
    </location>
</feature>
<feature type="region of interest" description="Disordered" evidence="4">
    <location>
        <begin position="587"/>
        <end position="609"/>
    </location>
</feature>
<feature type="region of interest" description="Disordered" evidence="4">
    <location>
        <begin position="717"/>
        <end position="771"/>
    </location>
</feature>
<feature type="region of interest" description="Disordered" evidence="4">
    <location>
        <begin position="818"/>
        <end position="863"/>
    </location>
</feature>
<feature type="region of interest" description="Disordered" evidence="4">
    <location>
        <begin position="1186"/>
        <end position="1238"/>
    </location>
</feature>
<feature type="region of interest" description="Disordered" evidence="4">
    <location>
        <begin position="1597"/>
        <end position="1627"/>
    </location>
</feature>
<feature type="region of interest" description="Disordered" evidence="4">
    <location>
        <begin position="1823"/>
        <end position="1881"/>
    </location>
</feature>
<feature type="region of interest" description="Disordered" evidence="4">
    <location>
        <begin position="1893"/>
        <end position="1928"/>
    </location>
</feature>
<feature type="region of interest" description="Disordered" evidence="4">
    <location>
        <begin position="2127"/>
        <end position="2148"/>
    </location>
</feature>
<feature type="compositionally biased region" description="Acidic residues" evidence="4">
    <location>
        <begin position="473"/>
        <end position="487"/>
    </location>
</feature>
<feature type="compositionally biased region" description="Basic residues" evidence="4">
    <location>
        <begin position="491"/>
        <end position="502"/>
    </location>
</feature>
<feature type="compositionally biased region" description="Basic and acidic residues" evidence="4">
    <location>
        <begin position="759"/>
        <end position="770"/>
    </location>
</feature>
<feature type="compositionally biased region" description="Basic and acidic residues" evidence="4">
    <location>
        <begin position="825"/>
        <end position="835"/>
    </location>
</feature>
<feature type="compositionally biased region" description="Basic and acidic residues" evidence="4">
    <location>
        <begin position="1186"/>
        <end position="1195"/>
    </location>
</feature>
<feature type="compositionally biased region" description="Basic residues" evidence="4">
    <location>
        <begin position="1198"/>
        <end position="1214"/>
    </location>
</feature>
<feature type="compositionally biased region" description="Basic and acidic residues" evidence="4">
    <location>
        <begin position="1228"/>
        <end position="1238"/>
    </location>
</feature>
<feature type="compositionally biased region" description="Acidic residues" evidence="4">
    <location>
        <begin position="1605"/>
        <end position="1616"/>
    </location>
</feature>
<feature type="compositionally biased region" description="Low complexity" evidence="4">
    <location>
        <begin position="1903"/>
        <end position="1912"/>
    </location>
</feature>
<feature type="compositionally biased region" description="Polar residues" evidence="4">
    <location>
        <begin position="2132"/>
        <end position="2148"/>
    </location>
</feature>
<feature type="modified residue" description="Phosphoserine" evidence="2">
    <location>
        <position position="666"/>
    </location>
</feature>
<feature type="modified residue" description="Phosphoserine" evidence="2">
    <location>
        <position position="1062"/>
    </location>
</feature>
<feature type="modified residue" description="Phosphothreonine" evidence="3">
    <location>
        <position position="1195"/>
    </location>
</feature>
<feature type="modified residue" description="Phosphoserine" evidence="2">
    <location>
        <position position="1624"/>
    </location>
</feature>
<feature type="modified residue" description="Phosphoserine" evidence="2">
    <location>
        <position position="1853"/>
    </location>
</feature>
<feature type="modified residue" description="Phosphoserine" evidence="3">
    <location>
        <position position="1893"/>
    </location>
</feature>
<feature type="cross-link" description="Glycyl lysine isopeptide (Lys-Gly) (interchain with G-Cter in SUMO2)" evidence="2">
    <location>
        <position position="533"/>
    </location>
</feature>
<feature type="cross-link" description="Glycyl lysine isopeptide (Lys-Gly) (interchain with G-Cter in SUMO2)" evidence="2">
    <location>
        <position position="769"/>
    </location>
</feature>
<feature type="cross-link" description="Glycyl lysine isopeptide (Lys-Gly) (interchain with G-Cter in SUMO2)" evidence="2">
    <location>
        <position position="832"/>
    </location>
</feature>
<comment type="function">
    <text evidence="1">Required for RNA polymerase III-mediated transcription. Component of TFIIIC that initiates transcription complex assembly on tRNA and is required for transcription of 5S rRNA and other stable nuclear and cytoplasmic RNAs. Binds to the box B promoter element (By similarity).</text>
</comment>
<comment type="subunit">
    <text evidence="2">Part of the TFIIIC subcomplex TFIIIC2, consisting of six subunits, GTF3C1, GTF3C2, GTF3C3, GTF3C4, GTF3C5 and GTF3C6. Interacts with IGHMBP2. Interacts with MAF1.</text>
</comment>
<comment type="subcellular location">
    <subcellularLocation>
        <location>Nucleus</location>
    </subcellularLocation>
</comment>
<comment type="similarity">
    <text evidence="5">Belongs to the TFIIIC subunit 1 family.</text>
</comment>
<reference key="1">
    <citation type="journal article" date="1994" name="Mol. Cell. Biol.">
        <title>Cloning and characterization of an evolutionarily divergent DNA-binding subunit of mammalian TFIIIC.</title>
        <authorList>
            <person name="Lagna G."/>
            <person name="Kovelman R."/>
            <person name="Sukegawa J."/>
            <person name="Roeder R.G."/>
        </authorList>
    </citation>
    <scope>NUCLEOTIDE SEQUENCE [MRNA]</scope>
    <scope>PROTEIN SEQUENCE OF 151-172; 360-385; 686-713 AND 1338-1354</scope>
    <source>
        <tissue>Hepatocyte</tissue>
    </source>
</reference>
<dbReference type="EMBL" id="L28801">
    <property type="protein sequence ID" value="AAA42032.1"/>
    <property type="molecule type" value="mRNA"/>
</dbReference>
<dbReference type="PIR" id="A56011">
    <property type="entry name" value="A56011"/>
</dbReference>
<dbReference type="SMR" id="Q63505"/>
<dbReference type="BioGRID" id="251080">
    <property type="interactions" value="1"/>
</dbReference>
<dbReference type="FunCoup" id="Q63505">
    <property type="interactions" value="3442"/>
</dbReference>
<dbReference type="STRING" id="10116.ENSRNOP00000022271"/>
<dbReference type="GlyGen" id="Q63505">
    <property type="glycosylation" value="2 sites"/>
</dbReference>
<dbReference type="iPTMnet" id="Q63505"/>
<dbReference type="PhosphoSitePlus" id="Q63505"/>
<dbReference type="PaxDb" id="10116-ENSRNOP00000022271"/>
<dbReference type="UCSC" id="RGD:621048">
    <property type="organism name" value="rat"/>
</dbReference>
<dbReference type="AGR" id="RGD:621048"/>
<dbReference type="RGD" id="621048">
    <property type="gene designation" value="Gtf3c1"/>
</dbReference>
<dbReference type="eggNOG" id="KOG4560">
    <property type="taxonomic scope" value="Eukaryota"/>
</dbReference>
<dbReference type="InParanoid" id="Q63505"/>
<dbReference type="OrthoDB" id="68020at2759"/>
<dbReference type="PhylomeDB" id="Q63505"/>
<dbReference type="Reactome" id="R-RNO-76061">
    <property type="pathway name" value="RNA Polymerase III Transcription Initiation From Type 1 Promoter"/>
</dbReference>
<dbReference type="Reactome" id="R-RNO-76066">
    <property type="pathway name" value="RNA Polymerase III Transcription Initiation From Type 2 Promoter"/>
</dbReference>
<dbReference type="PRO" id="PR:Q63505"/>
<dbReference type="Proteomes" id="UP000002494">
    <property type="component" value="Unplaced"/>
</dbReference>
<dbReference type="GO" id="GO:0005634">
    <property type="term" value="C:nucleus"/>
    <property type="evidence" value="ECO:0007669"/>
    <property type="project" value="UniProtKB-SubCell"/>
</dbReference>
<dbReference type="GO" id="GO:1990904">
    <property type="term" value="C:ribonucleoprotein complex"/>
    <property type="evidence" value="ECO:0000266"/>
    <property type="project" value="RGD"/>
</dbReference>
<dbReference type="GO" id="GO:0000127">
    <property type="term" value="C:transcription factor TFIIIC complex"/>
    <property type="evidence" value="ECO:0000266"/>
    <property type="project" value="RGD"/>
</dbReference>
<dbReference type="GO" id="GO:0003677">
    <property type="term" value="F:DNA binding"/>
    <property type="evidence" value="ECO:0007669"/>
    <property type="project" value="UniProtKB-KW"/>
</dbReference>
<dbReference type="GO" id="GO:0000995">
    <property type="term" value="F:RNA polymerase III general transcription initiation factor activity"/>
    <property type="evidence" value="ECO:0000266"/>
    <property type="project" value="RGD"/>
</dbReference>
<dbReference type="GO" id="GO:0042791">
    <property type="term" value="P:5S class rRNA transcription by RNA polymerase III"/>
    <property type="evidence" value="ECO:0000318"/>
    <property type="project" value="GO_Central"/>
</dbReference>
<dbReference type="GO" id="GO:0006384">
    <property type="term" value="P:transcription initiation at RNA polymerase III promoter"/>
    <property type="evidence" value="ECO:0000318"/>
    <property type="project" value="GO_Central"/>
</dbReference>
<dbReference type="CDD" id="cd16169">
    <property type="entry name" value="Tau138_eWH"/>
    <property type="match status" value="1"/>
</dbReference>
<dbReference type="InterPro" id="IPR056467">
    <property type="entry name" value="eWH_GTF3C1"/>
</dbReference>
<dbReference type="InterPro" id="IPR044210">
    <property type="entry name" value="Tfc3-like"/>
</dbReference>
<dbReference type="InterPro" id="IPR035625">
    <property type="entry name" value="Tfc3-like_eWH"/>
</dbReference>
<dbReference type="InterPro" id="IPR007309">
    <property type="entry name" value="TFIIIC_Bblock-bd"/>
</dbReference>
<dbReference type="InterPro" id="IPR056428">
    <property type="entry name" value="WH_GTF3C1"/>
</dbReference>
<dbReference type="PANTHER" id="PTHR15180">
    <property type="entry name" value="GENERAL TRANSCRIPTION FACTOR 3C POLYPEPTIDE 1"/>
    <property type="match status" value="1"/>
</dbReference>
<dbReference type="PANTHER" id="PTHR15180:SF1">
    <property type="entry name" value="GENERAL TRANSCRIPTION FACTOR 3C POLYPEPTIDE 1"/>
    <property type="match status" value="1"/>
</dbReference>
<dbReference type="Pfam" id="PF04182">
    <property type="entry name" value="B-block_TFIIIC"/>
    <property type="match status" value="1"/>
</dbReference>
<dbReference type="Pfam" id="PF24101">
    <property type="entry name" value="eWH_GTF3C1"/>
    <property type="match status" value="1"/>
</dbReference>
<dbReference type="Pfam" id="PF23704">
    <property type="entry name" value="WH_GTF3C1_N"/>
    <property type="match status" value="1"/>
</dbReference>
<proteinExistence type="evidence at protein level"/>
<sequence length="2148" mass="242306">MDALESLLDEVALEGLDGLCLPALWSRLESRSPAFPLPLEPYTQEFLWRALVTHPGISFYEEPRERPDLQLQDRYEEIDLETGILESRRDPVTLEDVYPIHMILENKDGIQGSCRYFKERKDITSSIRSKCLQPRCTMVEAFSRWGKKLIIVASQDMRYRALIGLEGDPDLKLPDFSYCILERLGRSRWQGELQRDLHTTAFKVDAGKLHYHRKILNKNGLITMQSHVIRLPTGAQQHSILLLLNRFHVDRRSKYDILMEKLSMMLSTRSNQIETLGKLREELGLCERTFKRLYQYMLNAGLAKVVSLPLQEIHPECGPCKTKKGTDVMVRCLKLLKEFRRKMEDDHDDDDDEEAISKAVPPVDIVFERDMLTQTYELIERRGTKGISQAEIRVAMNVGKLEARMLCRLLQRFKVVKGFMEDEGRQRTTKYISCVFAEESDLSRQYAREKARGELLTTVSLASVQDESLMPEGEEAFLSDSESEEESSCSGKRRGRGSRGHSRASGDAGPGSRPHHSTPAKGGWKVLNLHPLKKPKSAAVERSRRSSACRDGLDTSSSSELNIPFDPHSMDSHSGDIAVIEEVRLDNPKEGGGSQKGGRHGSGQDKPHKTYRLLKRRNLIIEAVTNLRLIESLFTIQKMIMDQEKQEGVSTKCCKKSIIRLVRNLSEEGLLRLYRTTVIQDGIKKKVDLVVHPSMDQNDPLVRSAIEQVRFRISNSSTANRVKVPPAPAPQEEAEEGNQEPEVPSRSADSEANTSSKPESTRVKKTDEKMGITPLKNYKPVIVPGLGRSIGFLPKMPRLRVMHLFLWYLVYGHPASHTGEQPTFHSERKTGKQEPSRPGVQPSSGDDWDSSEAKNSTESSSWEAEMELSTERVYVDEISWMRYVPPIPIHRDFGFGWALVSDILLCLPLSIFVQVVQVSYKVDNLEDFLNDPLKKHTLIRFLPRHIRQQLLYKRRYIFSVVENLQRLCYMGLLQFGPTEKFQDKDQVFVFLKKNAVIVDTTICDPHYNLAHSSRPFERRLYVLDSMQDVESYWFDLQCICLNTPLGVVRCPCAQKICPDPGSDPEGSLRKEQESAMDKHNLERKCAMLEYTTGSREVVDEGLVPGDGLGAAGLDSSFYAHLKRNWVWTSYIINKARKNNTSENGLTGRLQTFLSKRPMPLGSGGSGRLPLWSEGKADAELCADKEEHFELDREPTPGRNRKVRGGKSQKRKRLKKEPIRKTKRRRRGEHPEAKSKKLRYQDEADQNALRMMTRLRVSWSMQEDGLLMLCRIASNVLNTKVKGPFVTWQVVRDILHATFEESLDKTSHSVGRRARYIVKNPQAFMNYKVCLAEVYQDKALVGDFMSRKDNYEDPKVCAKEFKEFVEKLKEKFSSGLRNPNLEIPDTLQELFAKYRVLAIGDEKDRVRKEDELNSVEDIHFLVLQNLIQSTLSLSNSQSNSCQSFQIFRLYREFREPVLVRAFMECQKRSLVNRRRVSHSQGPKKNRAVPFVPMSYQLSQSYYKLFTWRFPTTVCTESFQFYDRLRANGILDQPDHFSFKDMDSNDPSSDLVAFSLDSPGGHCVTALALFSLGLLSVDVRIPEQIVVVDSSMVESEVMKSLGKDGGLDDDDEEEDLDEGSGTKRQSVEVKAHQASHTKYLLMRGYYTVPGMVSTRNLNPNDSIVVNSCQVKFRLRNTPAPTHLGPTGPTATPLEELQAGPSCLPASFTSLVDPQLHTRCPEEFAHQMAQSGYSPEDVAASLEILQAVAAADCFGVDREKLSRQFSALEKIADKRTRTFLDYIQDLLEQQQVMEVGGNTVRLVAMASAQPWLLPSVRLKDVEIDTKASGDDSQSRLPAGSSIEDHTSEGAPIPPVSSNGTKKRPYCSIQSPETDAEEATRLPAKKPTLQDVCVAASPRPGTEEQTEAQAQFAAPEDAGAEGPRQESQESVGVSGLEQLGCEFQLPENSEDPRGLTESNMAQVAWESGCERVCFVGRPWRGVDGRLNMPVCKGMMEAVLYHIMSRPGVPESCLLQYYQGVLQPVAVLELLRGLESLGCIQKRMLKKPASVSLFSRPVVEGLGQASEAEALSCQGSTVTFYEPTLDCTIRLGRVFPHDINWKQSGSIYRCVPGQQRSLCPCLIVPPGLSQEPRPSHSCYQSSAQPSTGVATSR</sequence>
<gene>
    <name type="primary">Gtf3c1</name>
</gene>
<keyword id="KW-0903">Direct protein sequencing</keyword>
<keyword id="KW-0238">DNA-binding</keyword>
<keyword id="KW-1017">Isopeptide bond</keyword>
<keyword id="KW-0539">Nucleus</keyword>
<keyword id="KW-0597">Phosphoprotein</keyword>
<keyword id="KW-1185">Reference proteome</keyword>
<keyword id="KW-0804">Transcription</keyword>
<keyword id="KW-0832">Ubl conjugation</keyword>
<evidence type="ECO:0000250" key="1"/>
<evidence type="ECO:0000250" key="2">
    <source>
        <dbReference type="UniProtKB" id="Q12789"/>
    </source>
</evidence>
<evidence type="ECO:0000250" key="3">
    <source>
        <dbReference type="UniProtKB" id="Q8K284"/>
    </source>
</evidence>
<evidence type="ECO:0000256" key="4">
    <source>
        <dbReference type="SAM" id="MobiDB-lite"/>
    </source>
</evidence>
<evidence type="ECO:0000305" key="5"/>
<protein>
    <recommendedName>
        <fullName>General transcription factor 3C polypeptide 1</fullName>
    </recommendedName>
    <alternativeName>
        <fullName>TF3C-alpha</fullName>
    </alternativeName>
    <alternativeName>
        <fullName>TFIIIC box B-binding subunit</fullName>
    </alternativeName>
    <alternativeName>
        <fullName>Transcription factor IIIC 220 kDa subunit</fullName>
        <shortName>TFIIIC 220 kDa subunit</shortName>
        <shortName>TFIIIC220</shortName>
    </alternativeName>
    <alternativeName>
        <fullName>Transcription factor IIIC subunit alpha</fullName>
    </alternativeName>
</protein>
<accession>Q63505</accession>